<dbReference type="EMBL" id="X15901">
    <property type="protein sequence ID" value="CAA33969.1"/>
    <property type="molecule type" value="Genomic_DNA"/>
</dbReference>
<dbReference type="EMBL" id="AY522330">
    <property type="protein sequence ID" value="AAS46134.1"/>
    <property type="molecule type" value="Genomic_DNA"/>
</dbReference>
<dbReference type="EMBL" id="AP005161">
    <property type="protein sequence ID" value="BAD05523.1"/>
    <property type="molecule type" value="Genomic_DNA"/>
</dbReference>
<dbReference type="PIR" id="JQ0247">
    <property type="entry name" value="R5RZ33"/>
</dbReference>
<dbReference type="RefSeq" id="NP_039407.1">
    <property type="nucleotide sequence ID" value="NC_001320.1"/>
</dbReference>
<dbReference type="FunCoup" id="P0C457">
    <property type="interactions" value="43"/>
</dbReference>
<dbReference type="STRING" id="39947.P0C457"/>
<dbReference type="PaxDb" id="39947-P0C457"/>
<dbReference type="GeneID" id="3131429"/>
<dbReference type="KEGG" id="dosa:rpl33"/>
<dbReference type="KEGG" id="osa:3131429"/>
<dbReference type="InParanoid" id="P0C457"/>
<dbReference type="OrthoDB" id="724366at2759"/>
<dbReference type="Proteomes" id="UP000000763">
    <property type="component" value="Chromosome 8"/>
</dbReference>
<dbReference type="Proteomes" id="UP000059680">
    <property type="component" value="Chloroplast"/>
</dbReference>
<dbReference type="GO" id="GO:0009507">
    <property type="term" value="C:chloroplast"/>
    <property type="evidence" value="ECO:0007669"/>
    <property type="project" value="UniProtKB-SubCell"/>
</dbReference>
<dbReference type="GO" id="GO:0009536">
    <property type="term" value="C:plastid"/>
    <property type="evidence" value="ECO:0000305"/>
    <property type="project" value="Gramene"/>
</dbReference>
<dbReference type="GO" id="GO:1990904">
    <property type="term" value="C:ribonucleoprotein complex"/>
    <property type="evidence" value="ECO:0007669"/>
    <property type="project" value="UniProtKB-KW"/>
</dbReference>
<dbReference type="GO" id="GO:0005840">
    <property type="term" value="C:ribosome"/>
    <property type="evidence" value="ECO:0007669"/>
    <property type="project" value="UniProtKB-KW"/>
</dbReference>
<dbReference type="GO" id="GO:0003735">
    <property type="term" value="F:structural constituent of ribosome"/>
    <property type="evidence" value="ECO:0007669"/>
    <property type="project" value="InterPro"/>
</dbReference>
<dbReference type="GO" id="GO:0006412">
    <property type="term" value="P:translation"/>
    <property type="evidence" value="ECO:0007669"/>
    <property type="project" value="UniProtKB-UniRule"/>
</dbReference>
<dbReference type="Gene3D" id="2.20.28.120">
    <property type="entry name" value="Ribosomal protein L33"/>
    <property type="match status" value="1"/>
</dbReference>
<dbReference type="HAMAP" id="MF_00294">
    <property type="entry name" value="Ribosomal_bL33"/>
    <property type="match status" value="1"/>
</dbReference>
<dbReference type="InterPro" id="IPR001705">
    <property type="entry name" value="Ribosomal_bL33"/>
</dbReference>
<dbReference type="InterPro" id="IPR018264">
    <property type="entry name" value="Ribosomal_bL33_CS"/>
</dbReference>
<dbReference type="InterPro" id="IPR038584">
    <property type="entry name" value="Ribosomal_bL33_sf"/>
</dbReference>
<dbReference type="InterPro" id="IPR011332">
    <property type="entry name" value="Ribosomal_zn-bd"/>
</dbReference>
<dbReference type="NCBIfam" id="NF001764">
    <property type="entry name" value="PRK00504.1"/>
    <property type="match status" value="1"/>
</dbReference>
<dbReference type="NCBIfam" id="NF001860">
    <property type="entry name" value="PRK00595.1"/>
    <property type="match status" value="1"/>
</dbReference>
<dbReference type="NCBIfam" id="TIGR01023">
    <property type="entry name" value="rpmG_bact"/>
    <property type="match status" value="1"/>
</dbReference>
<dbReference type="PANTHER" id="PTHR43168">
    <property type="entry name" value="50S RIBOSOMAL PROTEIN L33, CHLOROPLASTIC"/>
    <property type="match status" value="1"/>
</dbReference>
<dbReference type="PANTHER" id="PTHR43168:SF2">
    <property type="entry name" value="LARGE RIBOSOMAL SUBUNIT PROTEIN BL33C"/>
    <property type="match status" value="1"/>
</dbReference>
<dbReference type="Pfam" id="PF00471">
    <property type="entry name" value="Ribosomal_L33"/>
    <property type="match status" value="1"/>
</dbReference>
<dbReference type="SUPFAM" id="SSF57829">
    <property type="entry name" value="Zn-binding ribosomal proteins"/>
    <property type="match status" value="1"/>
</dbReference>
<dbReference type="PROSITE" id="PS00582">
    <property type="entry name" value="RIBOSOMAL_L33"/>
    <property type="match status" value="1"/>
</dbReference>
<keyword id="KW-0150">Chloroplast</keyword>
<keyword id="KW-0934">Plastid</keyword>
<keyword id="KW-1185">Reference proteome</keyword>
<keyword id="KW-0687">Ribonucleoprotein</keyword>
<keyword id="KW-0689">Ribosomal protein</keyword>
<proteinExistence type="inferred from homology"/>
<evidence type="ECO:0000250" key="1"/>
<evidence type="ECO:0000305" key="2"/>
<organism>
    <name type="scientific">Oryza sativa subsp. japonica</name>
    <name type="common">Rice</name>
    <dbReference type="NCBI Taxonomy" id="39947"/>
    <lineage>
        <taxon>Eukaryota</taxon>
        <taxon>Viridiplantae</taxon>
        <taxon>Streptophyta</taxon>
        <taxon>Embryophyta</taxon>
        <taxon>Tracheophyta</taxon>
        <taxon>Spermatophyta</taxon>
        <taxon>Magnoliopsida</taxon>
        <taxon>Liliopsida</taxon>
        <taxon>Poales</taxon>
        <taxon>Poaceae</taxon>
        <taxon>BOP clade</taxon>
        <taxon>Oryzoideae</taxon>
        <taxon>Oryzeae</taxon>
        <taxon>Oryzinae</taxon>
        <taxon>Oryza</taxon>
        <taxon>Oryza sativa</taxon>
    </lineage>
</organism>
<feature type="initiator methionine" description="Removed" evidence="1">
    <location>
        <position position="1"/>
    </location>
</feature>
<feature type="chain" id="PRO_0000290054" description="Large ribosomal subunit protein bL33c">
    <location>
        <begin position="2"/>
        <end position="66"/>
    </location>
</feature>
<protein>
    <recommendedName>
        <fullName evidence="2">Large ribosomal subunit protein bL33c</fullName>
    </recommendedName>
    <alternativeName>
        <fullName>50S ribosomal protein L33, chloroplastic</fullName>
    </alternativeName>
</protein>
<accession>P0C457</accession>
<accession>P12141</accession>
<accession>Q6QY61</accession>
<accession>Q6Z503</accession>
<gene>
    <name type="primary">rpl33</name>
    <name type="ORF">Nip086</name>
</gene>
<geneLocation type="chloroplast"/>
<sequence length="66" mass="7643">MAKGKDVRIRVILQCVSCVRKGANEESAGISRYSTQKNRHNTPGQLELRKFCRYCRKHTIHAEIKK</sequence>
<comment type="subcellular location">
    <subcellularLocation>
        <location>Plastid</location>
        <location>Chloroplast</location>
    </subcellularLocation>
</comment>
<comment type="similarity">
    <text evidence="2">Belongs to the bacterial ribosomal protein bL33 family.</text>
</comment>
<comment type="caution">
    <text evidence="2">A stretch of the chloroplast genome is duplicated within chromosome 8 resulting in the duplication of the gene. The expression of this duplicated gene has not been demonstrated.</text>
</comment>
<name>RK33_ORYSJ</name>
<reference key="1">
    <citation type="journal article" date="1989" name="Mol. Gen. Genet.">
        <title>The complete sequence of the rice (Oryza sativa) chloroplast genome: intermolecular recombination between distinct tRNA genes accounts for a major plastid DNA inversion during the evolution of the cereals.</title>
        <authorList>
            <person name="Hiratsuka J."/>
            <person name="Shimada H."/>
            <person name="Whittier R."/>
            <person name="Ishibashi T."/>
            <person name="Sakamoto M."/>
            <person name="Mori M."/>
            <person name="Kondo C."/>
            <person name="Honji Y."/>
            <person name="Sun C.-R."/>
            <person name="Meng B.-Y."/>
            <person name="Li Y.-Q."/>
            <person name="Kanno A."/>
            <person name="Nishizawa Y."/>
            <person name="Hirai A."/>
            <person name="Shinozaki K."/>
            <person name="Sugiura M."/>
        </authorList>
    </citation>
    <scope>NUCLEOTIDE SEQUENCE [LARGE SCALE GENOMIC DNA]</scope>
    <source>
        <strain>cv. Nipponbare</strain>
    </source>
</reference>
<reference key="2">
    <citation type="journal article" date="2004" name="Plant Physiol.">
        <title>A comparison of rice chloroplast genomes.</title>
        <authorList>
            <person name="Tang J."/>
            <person name="Xia H."/>
            <person name="Cao M."/>
            <person name="Zhang X."/>
            <person name="Zeng W."/>
            <person name="Hu S."/>
            <person name="Tong W."/>
            <person name="Wang J."/>
            <person name="Wang J."/>
            <person name="Yu J."/>
            <person name="Yang H."/>
            <person name="Zhu L."/>
        </authorList>
    </citation>
    <scope>NUCLEOTIDE SEQUENCE [LARGE SCALE GENOMIC DNA]</scope>
    <source>
        <strain>cv. Nipponbare</strain>
    </source>
</reference>
<reference key="3">
    <citation type="journal article" date="2005" name="Nature">
        <title>The map-based sequence of the rice genome.</title>
        <authorList>
            <consortium name="International rice genome sequencing project (IRGSP)"/>
        </authorList>
    </citation>
    <scope>NUCLEOTIDE SEQUENCE [LARGE SCALE GENOMIC DNA]</scope>
    <source>
        <strain>cv. Nipponbare</strain>
    </source>
</reference>